<sequence length="241" mass="25293">MKKLLSILAVFGVSAVGTTSVVACNKTESNNLSIVKTIAVPATVATANPKQVTNAEIKTALEANVLKAVQGVVKTATAADFQFDVYQDNKGTSLTTINLEEGNVEVYVQITPAKDKTVVIGETGYIKVTLPKIKVDISGVVIDQQIVEIKAADPKQVTKDELNAVNTYATLASAVLEAIKNKAPNAGASDFEITNNCDAGDYSAQKDVKVTVKAKDESPNISGEFKVNAKVKATLAPPKAG</sequence>
<evidence type="ECO:0000250" key="1"/>
<evidence type="ECO:0000255" key="2">
    <source>
        <dbReference type="PROSITE-ProRule" id="PRU00303"/>
    </source>
</evidence>
<evidence type="ECO:0000305" key="3"/>
<gene>
    <name type="primary">spi</name>
</gene>
<proteinExistence type="inferred from homology"/>
<dbReference type="EMBL" id="AF012877">
    <property type="protein sequence ID" value="AAB69997.1"/>
    <property type="molecule type" value="Genomic_DNA"/>
</dbReference>
<dbReference type="EMBL" id="U13998">
    <property type="protein sequence ID" value="AAB06630.1"/>
    <property type="molecule type" value="Genomic_DNA"/>
</dbReference>
<dbReference type="PIR" id="D35270">
    <property type="entry name" value="D35270"/>
</dbReference>
<dbReference type="RefSeq" id="WP_071937535.1">
    <property type="nucleotide sequence ID" value="NZ_CP013197.1"/>
</dbReference>
<dbReference type="STRING" id="2133.SCITRI_001129"/>
<dbReference type="GeneID" id="54238990"/>
<dbReference type="KEGG" id="sck:SCITRI_001129"/>
<dbReference type="OrthoDB" id="390336at2"/>
<dbReference type="GO" id="GO:0005886">
    <property type="term" value="C:plasma membrane"/>
    <property type="evidence" value="ECO:0007669"/>
    <property type="project" value="UniProtKB-SubCell"/>
</dbReference>
<dbReference type="InterPro" id="IPR054816">
    <property type="entry name" value="Lipoprotein_mollicutes-type_CS"/>
</dbReference>
<dbReference type="InterPro" id="IPR007880">
    <property type="entry name" value="Spiralin"/>
</dbReference>
<dbReference type="NCBIfam" id="NF038029">
    <property type="entry name" value="LP_plasma"/>
    <property type="match status" value="1"/>
</dbReference>
<dbReference type="NCBIfam" id="NF038030">
    <property type="entry name" value="spiralin_LP"/>
    <property type="match status" value="1"/>
</dbReference>
<dbReference type="NCBIfam" id="NF038028">
    <property type="entry name" value="spiralin_repeat"/>
    <property type="match status" value="1"/>
</dbReference>
<dbReference type="NCBIfam" id="NF045726">
    <property type="entry name" value="XXplasma_LP"/>
    <property type="match status" value="1"/>
</dbReference>
<dbReference type="Pfam" id="PF05215">
    <property type="entry name" value="Spiralin"/>
    <property type="match status" value="2"/>
</dbReference>
<dbReference type="PROSITE" id="PS51257">
    <property type="entry name" value="PROKAR_LIPOPROTEIN"/>
    <property type="match status" value="1"/>
</dbReference>
<comment type="function">
    <text>Major membrane protein of spiroplasma.</text>
</comment>
<comment type="subunit">
    <text>Seems to occur as dimer, tetramers, and large oligomers of identical chains.</text>
</comment>
<comment type="subcellular location">
    <subcellularLocation>
        <location evidence="2">Cell membrane</location>
        <topology evidence="2">Lipid-anchor</topology>
    </subcellularLocation>
</comment>
<comment type="PTM">
    <text evidence="1">Palmitate and stearate are the major lipid components.</text>
</comment>
<comment type="similarity">
    <text evidence="3">Belongs to the spiralin family.</text>
</comment>
<feature type="signal peptide" evidence="2">
    <location>
        <begin position="1"/>
        <end position="23"/>
    </location>
</feature>
<feature type="chain" id="PRO_0000022396" description="Spiralin">
    <location>
        <begin position="24"/>
        <end position="241"/>
    </location>
</feature>
<feature type="lipid moiety-binding region" description="N-palmitoyl cysteine" evidence="2">
    <location>
        <position position="24"/>
    </location>
</feature>
<feature type="lipid moiety-binding region" description="S-diacylglycerol cysteine" evidence="2">
    <location>
        <position position="24"/>
    </location>
</feature>
<feature type="sequence conflict" description="In Ref. 2; AAB06630." evidence="3" ref="2">
    <original>G</original>
    <variation>E</variation>
    <location>
        <position position="200"/>
    </location>
</feature>
<name>SPIR_SPICI</name>
<keyword id="KW-1003">Cell membrane</keyword>
<keyword id="KW-0449">Lipoprotein</keyword>
<keyword id="KW-0472">Membrane</keyword>
<keyword id="KW-0564">Palmitate</keyword>
<keyword id="KW-0732">Signal</keyword>
<protein>
    <recommendedName>
        <fullName>Spiralin</fullName>
    </recommendedName>
</protein>
<organism>
    <name type="scientific">Spiroplasma citri</name>
    <dbReference type="NCBI Taxonomy" id="2133"/>
    <lineage>
        <taxon>Bacteria</taxon>
        <taxon>Bacillati</taxon>
        <taxon>Mycoplasmatota</taxon>
        <taxon>Mollicutes</taxon>
        <taxon>Entomoplasmatales</taxon>
        <taxon>Spiroplasmataceae</taxon>
        <taxon>Spiroplasma</taxon>
    </lineage>
</organism>
<accession>P19215</accession>
<accession>Q53831</accession>
<reference key="1">
    <citation type="journal article" date="1990" name="J. Bacteriol.">
        <title>Organization and nucleotide sequences of the Spiroplasma citri genes for ribosomal protein S2, elongation factor Ts, spiralin, phosphofructokinase, pyruvate kinase, and an unidentified protein.</title>
        <authorList>
            <person name="Chevalier C."/>
            <person name="Saillard C."/>
            <person name="Bove J.M."/>
        </authorList>
    </citation>
    <scope>NUCLEOTIDE SEQUENCE [GENOMIC DNA]</scope>
    <source>
        <strain>ATCC 27556 / NCPPB 2647 / R8A2</strain>
    </source>
</reference>
<reference key="2">
    <citation type="journal article" date="1996" name="J. Bacteriol.">
        <title>Spiralin polymorphism in strains of Spiroplasma citri is not due to differences in posttranslational palmitoylation.</title>
        <authorList>
            <person name="Foissac X."/>
            <person name="Saillard C."/>
            <person name="Gandar J."/>
            <person name="Zreik L."/>
            <person name="Bove J.M."/>
        </authorList>
    </citation>
    <scope>NUCLEOTIDE SEQUENCE [GENOMIC DNA]</scope>
    <source>
        <strain>ATCC 27556 / NCPPB 2647 / R8A2</strain>
    </source>
</reference>
<reference key="3">
    <citation type="journal article" date="1998" name="Curr. Microbiol.">
        <title>Gene organization and transcriptional analysis of the Spiroplasma citri rpsB/tsf/x operon.</title>
        <authorList>
            <person name="Le Dantec L."/>
            <person name="Bove J.M."/>
            <person name="Saillard C."/>
        </authorList>
    </citation>
    <scope>NUCLEOTIDE SEQUENCE [GENOMIC DNA]</scope>
    <source>
        <strain>ATCC 27556 / NCPPB 2647 / R8A2</strain>
    </source>
</reference>